<organism>
    <name type="scientific">Methylorubrum populi (strain ATCC BAA-705 / NCIMB 13946 / BJ001)</name>
    <name type="common">Methylobacterium populi</name>
    <dbReference type="NCBI Taxonomy" id="441620"/>
    <lineage>
        <taxon>Bacteria</taxon>
        <taxon>Pseudomonadati</taxon>
        <taxon>Pseudomonadota</taxon>
        <taxon>Alphaproteobacteria</taxon>
        <taxon>Hyphomicrobiales</taxon>
        <taxon>Methylobacteriaceae</taxon>
        <taxon>Methylorubrum</taxon>
    </lineage>
</organism>
<reference key="1">
    <citation type="submission" date="2008-04" db="EMBL/GenBank/DDBJ databases">
        <title>Complete sequence of chromosome of Methylobacterium populi BJ001.</title>
        <authorList>
            <consortium name="US DOE Joint Genome Institute"/>
            <person name="Copeland A."/>
            <person name="Lucas S."/>
            <person name="Lapidus A."/>
            <person name="Glavina del Rio T."/>
            <person name="Dalin E."/>
            <person name="Tice H."/>
            <person name="Bruce D."/>
            <person name="Goodwin L."/>
            <person name="Pitluck S."/>
            <person name="Chertkov O."/>
            <person name="Brettin T."/>
            <person name="Detter J.C."/>
            <person name="Han C."/>
            <person name="Kuske C.R."/>
            <person name="Schmutz J."/>
            <person name="Larimer F."/>
            <person name="Land M."/>
            <person name="Hauser L."/>
            <person name="Kyrpides N."/>
            <person name="Mikhailova N."/>
            <person name="Marx C."/>
            <person name="Richardson P."/>
        </authorList>
    </citation>
    <scope>NUCLEOTIDE SEQUENCE [LARGE SCALE GENOMIC DNA]</scope>
    <source>
        <strain>ATCC BAA-705 / NCIMB 13946 / BJ001</strain>
    </source>
</reference>
<protein>
    <recommendedName>
        <fullName evidence="1">Large ribosomal subunit protein uL3</fullName>
    </recommendedName>
    <alternativeName>
        <fullName evidence="3">50S ribosomal protein L3</fullName>
    </alternativeName>
</protein>
<keyword id="KW-0488">Methylation</keyword>
<keyword id="KW-0687">Ribonucleoprotein</keyword>
<keyword id="KW-0689">Ribosomal protein</keyword>
<keyword id="KW-0694">RNA-binding</keyword>
<keyword id="KW-0699">rRNA-binding</keyword>
<comment type="function">
    <text evidence="1">One of the primary rRNA binding proteins, it binds directly near the 3'-end of the 23S rRNA, where it nucleates assembly of the 50S subunit.</text>
</comment>
<comment type="subunit">
    <text evidence="1">Part of the 50S ribosomal subunit. Forms a cluster with proteins L14 and L19.</text>
</comment>
<comment type="PTM">
    <text evidence="1">Methylated by PrmB.</text>
</comment>
<comment type="similarity">
    <text evidence="1">Belongs to the universal ribosomal protein uL3 family.</text>
</comment>
<dbReference type="EMBL" id="CP001029">
    <property type="protein sequence ID" value="ACB80285.1"/>
    <property type="molecule type" value="Genomic_DNA"/>
</dbReference>
<dbReference type="RefSeq" id="WP_012454026.1">
    <property type="nucleotide sequence ID" value="NC_010725.1"/>
</dbReference>
<dbReference type="SMR" id="B1ZLK4"/>
<dbReference type="STRING" id="441620.Mpop_2123"/>
<dbReference type="KEGG" id="mpo:Mpop_2123"/>
<dbReference type="eggNOG" id="COG0087">
    <property type="taxonomic scope" value="Bacteria"/>
</dbReference>
<dbReference type="HOGENOM" id="CLU_044142_2_0_5"/>
<dbReference type="OrthoDB" id="9806135at2"/>
<dbReference type="Proteomes" id="UP000007136">
    <property type="component" value="Chromosome"/>
</dbReference>
<dbReference type="GO" id="GO:0022625">
    <property type="term" value="C:cytosolic large ribosomal subunit"/>
    <property type="evidence" value="ECO:0007669"/>
    <property type="project" value="TreeGrafter"/>
</dbReference>
<dbReference type="GO" id="GO:0019843">
    <property type="term" value="F:rRNA binding"/>
    <property type="evidence" value="ECO:0007669"/>
    <property type="project" value="UniProtKB-UniRule"/>
</dbReference>
<dbReference type="GO" id="GO:0003735">
    <property type="term" value="F:structural constituent of ribosome"/>
    <property type="evidence" value="ECO:0007669"/>
    <property type="project" value="InterPro"/>
</dbReference>
<dbReference type="GO" id="GO:0006412">
    <property type="term" value="P:translation"/>
    <property type="evidence" value="ECO:0007669"/>
    <property type="project" value="UniProtKB-UniRule"/>
</dbReference>
<dbReference type="FunFam" id="2.40.30.10:FF:000004">
    <property type="entry name" value="50S ribosomal protein L3"/>
    <property type="match status" value="1"/>
</dbReference>
<dbReference type="FunFam" id="3.30.160.810:FF:000001">
    <property type="entry name" value="50S ribosomal protein L3"/>
    <property type="match status" value="1"/>
</dbReference>
<dbReference type="Gene3D" id="3.30.160.810">
    <property type="match status" value="1"/>
</dbReference>
<dbReference type="Gene3D" id="2.40.30.10">
    <property type="entry name" value="Translation factors"/>
    <property type="match status" value="1"/>
</dbReference>
<dbReference type="HAMAP" id="MF_01325_B">
    <property type="entry name" value="Ribosomal_uL3_B"/>
    <property type="match status" value="1"/>
</dbReference>
<dbReference type="InterPro" id="IPR000597">
    <property type="entry name" value="Ribosomal_uL3"/>
</dbReference>
<dbReference type="InterPro" id="IPR019927">
    <property type="entry name" value="Ribosomal_uL3_bac/org-type"/>
</dbReference>
<dbReference type="InterPro" id="IPR019926">
    <property type="entry name" value="Ribosomal_uL3_CS"/>
</dbReference>
<dbReference type="InterPro" id="IPR009000">
    <property type="entry name" value="Transl_B-barrel_sf"/>
</dbReference>
<dbReference type="NCBIfam" id="TIGR03625">
    <property type="entry name" value="L3_bact"/>
    <property type="match status" value="1"/>
</dbReference>
<dbReference type="PANTHER" id="PTHR11229">
    <property type="entry name" value="50S RIBOSOMAL PROTEIN L3"/>
    <property type="match status" value="1"/>
</dbReference>
<dbReference type="PANTHER" id="PTHR11229:SF16">
    <property type="entry name" value="LARGE RIBOSOMAL SUBUNIT PROTEIN UL3C"/>
    <property type="match status" value="1"/>
</dbReference>
<dbReference type="Pfam" id="PF00297">
    <property type="entry name" value="Ribosomal_L3"/>
    <property type="match status" value="1"/>
</dbReference>
<dbReference type="SUPFAM" id="SSF50447">
    <property type="entry name" value="Translation proteins"/>
    <property type="match status" value="1"/>
</dbReference>
<dbReference type="PROSITE" id="PS00474">
    <property type="entry name" value="RIBOSOMAL_L3"/>
    <property type="match status" value="1"/>
</dbReference>
<sequence length="246" mass="26122">MRSGVIARKVGMTRVFTDAGEHVPVTVLQIDQCQVVAHRTTEKDGYVALQVGVGKAKVKNVSQAERGRFAVAKVEPKKKLAEFRVSEDALIPVGAEITADHFIPGQFVDVTGTTTGKGFAGGMKRWNFGGLRATHGVSISHRSIGSTGGRQDPGKTFKNKKMPGHLGVERVTTQNLKVVRTDPERGLILVEGAVPGVAGGWIQVRDSVKRKLPADVPLPGKFRENGSAGASQVEAAPEAPASEENA</sequence>
<proteinExistence type="inferred from homology"/>
<evidence type="ECO:0000255" key="1">
    <source>
        <dbReference type="HAMAP-Rule" id="MF_01325"/>
    </source>
</evidence>
<evidence type="ECO:0000256" key="2">
    <source>
        <dbReference type="SAM" id="MobiDB-lite"/>
    </source>
</evidence>
<evidence type="ECO:0000305" key="3"/>
<feature type="chain" id="PRO_1000141887" description="Large ribosomal subunit protein uL3">
    <location>
        <begin position="1"/>
        <end position="246"/>
    </location>
</feature>
<feature type="region of interest" description="Disordered" evidence="2">
    <location>
        <begin position="140"/>
        <end position="162"/>
    </location>
</feature>
<feature type="region of interest" description="Disordered" evidence="2">
    <location>
        <begin position="215"/>
        <end position="246"/>
    </location>
</feature>
<feature type="compositionally biased region" description="Low complexity" evidence="2">
    <location>
        <begin position="234"/>
        <end position="246"/>
    </location>
</feature>
<feature type="modified residue" description="N5-methylglutamine" evidence="1">
    <location>
        <position position="151"/>
    </location>
</feature>
<name>RL3_METPB</name>
<accession>B1ZLK4</accession>
<gene>
    <name evidence="1" type="primary">rplC</name>
    <name type="ordered locus">Mpop_2123</name>
</gene>